<feature type="chain" id="PRO_0000358570" description="NAD(P)H-quinone oxidoreductase subunit K, chloroplastic">
    <location>
        <begin position="1"/>
        <end position="225"/>
    </location>
</feature>
<feature type="binding site" evidence="1">
    <location>
        <position position="43"/>
    </location>
    <ligand>
        <name>[4Fe-4S] cluster</name>
        <dbReference type="ChEBI" id="CHEBI:49883"/>
    </ligand>
</feature>
<feature type="binding site" evidence="1">
    <location>
        <position position="44"/>
    </location>
    <ligand>
        <name>[4Fe-4S] cluster</name>
        <dbReference type="ChEBI" id="CHEBI:49883"/>
    </ligand>
</feature>
<feature type="binding site" evidence="1">
    <location>
        <position position="108"/>
    </location>
    <ligand>
        <name>[4Fe-4S] cluster</name>
        <dbReference type="ChEBI" id="CHEBI:49883"/>
    </ligand>
</feature>
<feature type="binding site" evidence="1">
    <location>
        <position position="139"/>
    </location>
    <ligand>
        <name>[4Fe-4S] cluster</name>
        <dbReference type="ChEBI" id="CHEBI:49883"/>
    </ligand>
</feature>
<organism>
    <name type="scientific">Oenothera parviflora</name>
    <name type="common">Small-flowered evening primrose</name>
    <name type="synonym">Oenothera cruciata</name>
    <dbReference type="NCBI Taxonomy" id="482429"/>
    <lineage>
        <taxon>Eukaryota</taxon>
        <taxon>Viridiplantae</taxon>
        <taxon>Streptophyta</taxon>
        <taxon>Embryophyta</taxon>
        <taxon>Tracheophyta</taxon>
        <taxon>Spermatophyta</taxon>
        <taxon>Magnoliopsida</taxon>
        <taxon>eudicotyledons</taxon>
        <taxon>Gunneridae</taxon>
        <taxon>Pentapetalae</taxon>
        <taxon>rosids</taxon>
        <taxon>malvids</taxon>
        <taxon>Myrtales</taxon>
        <taxon>Onagraceae</taxon>
        <taxon>Onagroideae</taxon>
        <taxon>Onagreae</taxon>
        <taxon>Oenothera</taxon>
    </lineage>
</organism>
<reference key="1">
    <citation type="journal article" date="2008" name="Nucleic Acids Res.">
        <title>The complete nucleotide sequences of the five genetically distinct plastid genomes of Oenothera, subsection Oenothera: I. Sequence evaluation and plastome evolution.</title>
        <authorList>
            <person name="Greiner S."/>
            <person name="Wang X."/>
            <person name="Rauwolf U."/>
            <person name="Silber M.V."/>
            <person name="Mayer K."/>
            <person name="Meurer J."/>
            <person name="Haberer G."/>
            <person name="Herrmann R.G."/>
        </authorList>
    </citation>
    <scope>NUCLEOTIDE SEQUENCE [LARGE SCALE GENOMIC DNA]</scope>
    <source>
        <strain>cv. Atrovirens</strain>
    </source>
</reference>
<keyword id="KW-0004">4Fe-4S</keyword>
<keyword id="KW-0150">Chloroplast</keyword>
<keyword id="KW-0408">Iron</keyword>
<keyword id="KW-0411">Iron-sulfur</keyword>
<keyword id="KW-0472">Membrane</keyword>
<keyword id="KW-0479">Metal-binding</keyword>
<keyword id="KW-0520">NAD</keyword>
<keyword id="KW-0521">NADP</keyword>
<keyword id="KW-0934">Plastid</keyword>
<keyword id="KW-0618">Plastoquinone</keyword>
<keyword id="KW-0874">Quinone</keyword>
<keyword id="KW-0793">Thylakoid</keyword>
<keyword id="KW-1278">Translocase</keyword>
<keyword id="KW-0813">Transport</keyword>
<evidence type="ECO:0000255" key="1">
    <source>
        <dbReference type="HAMAP-Rule" id="MF_01356"/>
    </source>
</evidence>
<comment type="function">
    <text evidence="1">NDH shuttles electrons from NAD(P)H:plastoquinone, via FMN and iron-sulfur (Fe-S) centers, to quinones in the photosynthetic chain and possibly in a chloroplast respiratory chain. The immediate electron acceptor for the enzyme in this species is believed to be plastoquinone. Couples the redox reaction to proton translocation, and thus conserves the redox energy in a proton gradient.</text>
</comment>
<comment type="catalytic activity">
    <reaction evidence="1">
        <text>a plastoquinone + NADH + (n+1) H(+)(in) = a plastoquinol + NAD(+) + n H(+)(out)</text>
        <dbReference type="Rhea" id="RHEA:42608"/>
        <dbReference type="Rhea" id="RHEA-COMP:9561"/>
        <dbReference type="Rhea" id="RHEA-COMP:9562"/>
        <dbReference type="ChEBI" id="CHEBI:15378"/>
        <dbReference type="ChEBI" id="CHEBI:17757"/>
        <dbReference type="ChEBI" id="CHEBI:57540"/>
        <dbReference type="ChEBI" id="CHEBI:57945"/>
        <dbReference type="ChEBI" id="CHEBI:62192"/>
    </reaction>
</comment>
<comment type="catalytic activity">
    <reaction evidence="1">
        <text>a plastoquinone + NADPH + (n+1) H(+)(in) = a plastoquinol + NADP(+) + n H(+)(out)</text>
        <dbReference type="Rhea" id="RHEA:42612"/>
        <dbReference type="Rhea" id="RHEA-COMP:9561"/>
        <dbReference type="Rhea" id="RHEA-COMP:9562"/>
        <dbReference type="ChEBI" id="CHEBI:15378"/>
        <dbReference type="ChEBI" id="CHEBI:17757"/>
        <dbReference type="ChEBI" id="CHEBI:57783"/>
        <dbReference type="ChEBI" id="CHEBI:58349"/>
        <dbReference type="ChEBI" id="CHEBI:62192"/>
    </reaction>
</comment>
<comment type="cofactor">
    <cofactor evidence="1">
        <name>[4Fe-4S] cluster</name>
        <dbReference type="ChEBI" id="CHEBI:49883"/>
    </cofactor>
    <text evidence="1">Binds 1 [4Fe-4S] cluster.</text>
</comment>
<comment type="subunit">
    <text evidence="1">NDH is composed of at least 16 different subunits, 5 of which are encoded in the nucleus.</text>
</comment>
<comment type="subcellular location">
    <subcellularLocation>
        <location evidence="1">Plastid</location>
        <location evidence="1">Chloroplast thylakoid membrane</location>
        <topology evidence="1">Peripheral membrane protein</topology>
        <orientation evidence="1">Stromal side</orientation>
    </subcellularLocation>
</comment>
<comment type="similarity">
    <text evidence="1">Belongs to the complex I 20 kDa subunit family.</text>
</comment>
<dbReference type="EC" id="7.1.1.-" evidence="1"/>
<dbReference type="EMBL" id="EU262891">
    <property type="protein sequence ID" value="ABX10108.1"/>
    <property type="molecule type" value="Genomic_DNA"/>
</dbReference>
<dbReference type="RefSeq" id="YP_001687438.1">
    <property type="nucleotide sequence ID" value="NC_010362.1"/>
</dbReference>
<dbReference type="SMR" id="B0Z5B5"/>
<dbReference type="GeneID" id="5955365"/>
<dbReference type="GO" id="GO:0009535">
    <property type="term" value="C:chloroplast thylakoid membrane"/>
    <property type="evidence" value="ECO:0007669"/>
    <property type="project" value="UniProtKB-SubCell"/>
</dbReference>
<dbReference type="GO" id="GO:0045271">
    <property type="term" value="C:respiratory chain complex I"/>
    <property type="evidence" value="ECO:0007669"/>
    <property type="project" value="TreeGrafter"/>
</dbReference>
<dbReference type="GO" id="GO:0051539">
    <property type="term" value="F:4 iron, 4 sulfur cluster binding"/>
    <property type="evidence" value="ECO:0007669"/>
    <property type="project" value="UniProtKB-KW"/>
</dbReference>
<dbReference type="GO" id="GO:0005506">
    <property type="term" value="F:iron ion binding"/>
    <property type="evidence" value="ECO:0007669"/>
    <property type="project" value="UniProtKB-UniRule"/>
</dbReference>
<dbReference type="GO" id="GO:0008137">
    <property type="term" value="F:NADH dehydrogenase (ubiquinone) activity"/>
    <property type="evidence" value="ECO:0007669"/>
    <property type="project" value="InterPro"/>
</dbReference>
<dbReference type="GO" id="GO:0048038">
    <property type="term" value="F:quinone binding"/>
    <property type="evidence" value="ECO:0007669"/>
    <property type="project" value="UniProtKB-KW"/>
</dbReference>
<dbReference type="GO" id="GO:0009060">
    <property type="term" value="P:aerobic respiration"/>
    <property type="evidence" value="ECO:0007669"/>
    <property type="project" value="TreeGrafter"/>
</dbReference>
<dbReference type="GO" id="GO:0015990">
    <property type="term" value="P:electron transport coupled proton transport"/>
    <property type="evidence" value="ECO:0007669"/>
    <property type="project" value="TreeGrafter"/>
</dbReference>
<dbReference type="GO" id="GO:0019684">
    <property type="term" value="P:photosynthesis, light reaction"/>
    <property type="evidence" value="ECO:0007669"/>
    <property type="project" value="UniProtKB-UniRule"/>
</dbReference>
<dbReference type="FunFam" id="3.40.50.12280:FF:000003">
    <property type="entry name" value="NAD(P)H-quinone oxidoreductase subunit K, chloroplastic"/>
    <property type="match status" value="1"/>
</dbReference>
<dbReference type="Gene3D" id="3.40.50.12280">
    <property type="match status" value="1"/>
</dbReference>
<dbReference type="HAMAP" id="MF_01356">
    <property type="entry name" value="NDH1_NuoB"/>
    <property type="match status" value="1"/>
</dbReference>
<dbReference type="InterPro" id="IPR006137">
    <property type="entry name" value="NADH_UbQ_OxRdtase-like_20kDa"/>
</dbReference>
<dbReference type="InterPro" id="IPR006138">
    <property type="entry name" value="NADH_UQ_OxRdtase_20Kd_su"/>
</dbReference>
<dbReference type="NCBIfam" id="TIGR01957">
    <property type="entry name" value="nuoB_fam"/>
    <property type="match status" value="1"/>
</dbReference>
<dbReference type="NCBIfam" id="NF005012">
    <property type="entry name" value="PRK06411.1"/>
    <property type="match status" value="1"/>
</dbReference>
<dbReference type="PANTHER" id="PTHR11995">
    <property type="entry name" value="NADH DEHYDROGENASE"/>
    <property type="match status" value="1"/>
</dbReference>
<dbReference type="PANTHER" id="PTHR11995:SF14">
    <property type="entry name" value="NADH DEHYDROGENASE [UBIQUINONE] IRON-SULFUR PROTEIN 7, MITOCHONDRIAL"/>
    <property type="match status" value="1"/>
</dbReference>
<dbReference type="Pfam" id="PF01058">
    <property type="entry name" value="Oxidored_q6"/>
    <property type="match status" value="1"/>
</dbReference>
<dbReference type="SUPFAM" id="SSF56770">
    <property type="entry name" value="HydA/Nqo6-like"/>
    <property type="match status" value="1"/>
</dbReference>
<dbReference type="PROSITE" id="PS01150">
    <property type="entry name" value="COMPLEX1_20K"/>
    <property type="match status" value="1"/>
</dbReference>
<protein>
    <recommendedName>
        <fullName evidence="1">NAD(P)H-quinone oxidoreductase subunit K, chloroplastic</fullName>
        <ecNumber evidence="1">7.1.1.-</ecNumber>
    </recommendedName>
    <alternativeName>
        <fullName evidence="1">NAD(P)H dehydrogenase subunit K</fullName>
    </alternativeName>
    <alternativeName>
        <fullName evidence="1">NADH-plastoquinone oxidoreductase subunit K</fullName>
    </alternativeName>
</protein>
<proteinExistence type="inferred from homology"/>
<sequence>MNSIEFTLLARRTQNSVISTTSNDLSNWSRLSSLWPLLYGTSCCFIEFASLIGSRFDFDRYGLVPRSSPRQADLILTAGTVTMKMAPSLVRLYEQMPEPKYVIAMGACTITGGMFSTDSYSTVRGVDKLIPVDVYLPGCPPKPEAIIDAITKLRKKISREIYEDRIRSQEENRCFTTNHKFHVGPSMHTGNYDPGLLYQLPSTSEIASETFFKYKSSVSAHELVN</sequence>
<geneLocation type="chloroplast"/>
<gene>
    <name evidence="1" type="primary">ndhK</name>
</gene>
<name>NDHK_OENPA</name>
<accession>B0Z5B5</accession>